<keyword id="KW-1003">Cell membrane</keyword>
<keyword id="KW-0217">Developmental protein</keyword>
<keyword id="KW-0238">DNA-binding</keyword>
<keyword id="KW-0256">Endoplasmic reticulum</keyword>
<keyword id="KW-0472">Membrane</keyword>
<keyword id="KW-0539">Nucleus</keyword>
<keyword id="KW-0597">Phosphoprotein</keyword>
<keyword id="KW-1185">Reference proteome</keyword>
<keyword id="KW-0677">Repeat</keyword>
<keyword id="KW-0678">Repressor</keyword>
<keyword id="KW-0703">Sarcoplasmic reticulum</keyword>
<keyword id="KW-0804">Transcription</keyword>
<keyword id="KW-0805">Transcription regulation</keyword>
<keyword id="KW-0812">Transmembrane</keyword>
<keyword id="KW-1133">Transmembrane helix</keyword>
<comment type="function">
    <molecule>Junctophilin-2</molecule>
    <text evidence="3">Membrane-binding protein that provides a structural bridge between the plasma membrane and the sarcoplasmic reticulum and is required for normal excitation-contraction coupling in cardiomyocytes. Provides a structural foundation for functional cross-talk between the cell surface and intracellular Ca(2+) release channels by maintaining the 12-15 nm gap between the sarcolemma and the sarcoplasmic reticulum membranes in the cardiac dyads. Necessary for proper intracellular Ca(2+) signaling in cardiac myocytes via its involvement in ryanodine receptor-mediated calcium ion release. Contributes to the construction of skeletal muscle triad junctions.</text>
</comment>
<comment type="function">
    <molecule>Junctophilin-2 N-terminal fragment</molecule>
    <text evidence="3">Transcription repressor required to safeguard against the deleterious effects of cardiac stress. Generated following cleavage of the Junctophilin-2 chain by calpain in response to cardiac stress in cardiomyocytes. Following cleavage and release from the membrane, translocates to the nucleus, binds DNA and represses expression of genes implicated in cell growth and differentiation, hypertrophy, inflammation and fibrosis. Modifies the transcription profile and thereby attenuates pathological remodeling in response to cardiac stress. Probably acts by competing with MEF2 transcription factors and TATA-binding proteins.</text>
</comment>
<comment type="subunit">
    <text evidence="2 3">Interacts with TRPC3 (By similarity). Interacts with BAG5 and HSPA8; the interaction with HSPA8 is increased in the presence of BAG5 (By similarity). Junctophilin-2 N-terminal fragment: Interacts with MEF2C (By similarity).</text>
</comment>
<comment type="subcellular location">
    <molecule>Junctophilin-2</molecule>
    <subcellularLocation>
        <location evidence="3">Cell membrane</location>
        <topology evidence="3">Peripheral membrane protein</topology>
    </subcellularLocation>
    <subcellularLocation>
        <location evidence="3">Sarcoplasmic reticulum membrane</location>
        <topology evidence="3">Single-pass type IV membrane protein</topology>
    </subcellularLocation>
    <subcellularLocation>
        <location evidence="3">Endoplasmic reticulum membrane</location>
        <topology evidence="3">Single-pass type IV membrane protein</topology>
    </subcellularLocation>
    <text evidence="3">The transmembrane domain is anchored in sarcoplasmic reticulum membrane, while the N-terminal part associates with the plasma membrane. In heart cells, it predominantly associates along Z lines within myocytes. In skeletal muscle, it is specifically localized at the junction of A and I bands.</text>
</comment>
<comment type="subcellular location">
    <molecule>Junctophilin-2 N-terminal fragment</molecule>
    <subcellularLocation>
        <location evidence="3">Nucleus</location>
    </subcellularLocation>
    <text evidence="3">Accumulates in the nucleus of stressed hearts.</text>
</comment>
<comment type="domain">
    <molecule>Junctophilin-2</molecule>
    <text evidence="2">The MORN (membrane occupation and recognition nexus) repeats contribute to the plasma membrane binding, by interacting with phospholipids. Has affinity for phosphatidylserine, and phosphorylated phosphatidylinositols including PtdIns3P, PtdIns4P, PtdIns5P, PtdIns(3,5)P2 and PtdIns(3,4,5)P3.</text>
</comment>
<comment type="domain">
    <molecule>Junctophilin-2 N-terminal fragment</molecule>
    <text evidence="3">The bipartite nuclear localization signal (bNLS) and Ala-rich (alanine-rich; ARR) regions are involved in DNA-binding.</text>
</comment>
<comment type="PTM">
    <text evidence="3">Proteolytically cleaved by calpain in response to cardiac stress. The major cleavage site takes place at the C-terminus and leads to the release of the Junctophilin-2 N-terminal fragment chain (JP2NT).</text>
</comment>
<comment type="PTM">
    <text evidence="2">Phosphorylation on Ser-165, probably by PKC, affects RYR1-mediated calcium ion release, interaction with TRPC3, and skeletal muscle myotubule development.</text>
</comment>
<comment type="similarity">
    <text evidence="6">Belongs to the junctophilin family.</text>
</comment>
<name>JPH2_RABIT</name>
<reference key="1">
    <citation type="submission" date="1999-03" db="EMBL/GenBank/DDBJ databases">
        <title>Structure, distribution and gene mapping of junctophilin/mitsugumin72 subtypes.</title>
        <authorList>
            <person name="Takeshima H."/>
        </authorList>
    </citation>
    <scope>NUCLEOTIDE SEQUENCE [MRNA]</scope>
    <source>
        <tissue>Heart</tissue>
    </source>
</reference>
<dbReference type="EMBL" id="AB024444">
    <property type="protein sequence ID" value="BAB20318.1"/>
    <property type="molecule type" value="mRNA"/>
</dbReference>
<dbReference type="RefSeq" id="NP_001075467.1">
    <property type="nucleotide sequence ID" value="NM_001081998.1"/>
</dbReference>
<dbReference type="SMR" id="Q9GKY7"/>
<dbReference type="FunCoup" id="Q9GKY7">
    <property type="interactions" value="36"/>
</dbReference>
<dbReference type="STRING" id="9986.ENSOCUP00000019570"/>
<dbReference type="PaxDb" id="9986-ENSOCUP00000019570"/>
<dbReference type="GeneID" id="100008613"/>
<dbReference type="KEGG" id="ocu:100008613"/>
<dbReference type="CTD" id="57158"/>
<dbReference type="eggNOG" id="KOG0231">
    <property type="taxonomic scope" value="Eukaryota"/>
</dbReference>
<dbReference type="InParanoid" id="Q9GKY7"/>
<dbReference type="OrthoDB" id="284854at2759"/>
<dbReference type="Proteomes" id="UP000001811">
    <property type="component" value="Unplaced"/>
</dbReference>
<dbReference type="GO" id="GO:0030314">
    <property type="term" value="C:junctional membrane complex"/>
    <property type="evidence" value="ECO:0007669"/>
    <property type="project" value="InterPro"/>
</dbReference>
<dbReference type="GO" id="GO:0005634">
    <property type="term" value="C:nucleus"/>
    <property type="evidence" value="ECO:0007669"/>
    <property type="project" value="UniProtKB-SubCell"/>
</dbReference>
<dbReference type="GO" id="GO:0005886">
    <property type="term" value="C:plasma membrane"/>
    <property type="evidence" value="ECO:0007669"/>
    <property type="project" value="UniProtKB-SubCell"/>
</dbReference>
<dbReference type="GO" id="GO:0033017">
    <property type="term" value="C:sarcoplasmic reticulum membrane"/>
    <property type="evidence" value="ECO:0007669"/>
    <property type="project" value="UniProtKB-SubCell"/>
</dbReference>
<dbReference type="GO" id="GO:0003677">
    <property type="term" value="F:DNA binding"/>
    <property type="evidence" value="ECO:0007669"/>
    <property type="project" value="UniProtKB-KW"/>
</dbReference>
<dbReference type="GO" id="GO:0070300">
    <property type="term" value="F:phosphatidic acid binding"/>
    <property type="evidence" value="ECO:0000250"/>
    <property type="project" value="UniProtKB"/>
</dbReference>
<dbReference type="GO" id="GO:0005547">
    <property type="term" value="F:phosphatidylinositol-3,4,5-trisphosphate binding"/>
    <property type="evidence" value="ECO:0000250"/>
    <property type="project" value="UniProtKB"/>
</dbReference>
<dbReference type="GO" id="GO:0080025">
    <property type="term" value="F:phosphatidylinositol-3,5-bisphosphate binding"/>
    <property type="evidence" value="ECO:0000250"/>
    <property type="project" value="UniProtKB"/>
</dbReference>
<dbReference type="GO" id="GO:0032266">
    <property type="term" value="F:phosphatidylinositol-3-phosphate binding"/>
    <property type="evidence" value="ECO:0000250"/>
    <property type="project" value="UniProtKB"/>
</dbReference>
<dbReference type="GO" id="GO:0005546">
    <property type="term" value="F:phosphatidylinositol-4,5-bisphosphate binding"/>
    <property type="evidence" value="ECO:0000250"/>
    <property type="project" value="UniProtKB"/>
</dbReference>
<dbReference type="GO" id="GO:0070273">
    <property type="term" value="F:phosphatidylinositol-4-phosphate binding"/>
    <property type="evidence" value="ECO:0000250"/>
    <property type="project" value="UniProtKB"/>
</dbReference>
<dbReference type="GO" id="GO:0010314">
    <property type="term" value="F:phosphatidylinositol-5-phosphate binding"/>
    <property type="evidence" value="ECO:0000250"/>
    <property type="project" value="UniProtKB"/>
</dbReference>
<dbReference type="GO" id="GO:0001786">
    <property type="term" value="F:phosphatidylserine binding"/>
    <property type="evidence" value="ECO:0000250"/>
    <property type="project" value="UniProtKB"/>
</dbReference>
<dbReference type="FunFam" id="2.20.110.10:FF:000001">
    <property type="entry name" value="Junctophilin"/>
    <property type="match status" value="1"/>
</dbReference>
<dbReference type="FunFam" id="2.20.110.10:FF:000003">
    <property type="entry name" value="Junctophilin"/>
    <property type="match status" value="1"/>
</dbReference>
<dbReference type="Gene3D" id="2.20.110.10">
    <property type="entry name" value="Histone H3 K4-specific methyltransferase SET7/9 N-terminal domain"/>
    <property type="match status" value="2"/>
</dbReference>
<dbReference type="InterPro" id="IPR017191">
    <property type="entry name" value="Junctophilin"/>
</dbReference>
<dbReference type="InterPro" id="IPR003409">
    <property type="entry name" value="MORN"/>
</dbReference>
<dbReference type="PANTHER" id="PTHR23085">
    <property type="entry name" value="GH28348P"/>
    <property type="match status" value="1"/>
</dbReference>
<dbReference type="PANTHER" id="PTHR23085:SF26">
    <property type="entry name" value="JUNCTOPHILIN-2"/>
    <property type="match status" value="1"/>
</dbReference>
<dbReference type="Pfam" id="PF02493">
    <property type="entry name" value="MORN"/>
    <property type="match status" value="8"/>
</dbReference>
<dbReference type="PIRSF" id="PIRSF037387">
    <property type="entry name" value="Junctophilin"/>
    <property type="match status" value="1"/>
</dbReference>
<dbReference type="SMART" id="SM00698">
    <property type="entry name" value="MORN"/>
    <property type="match status" value="6"/>
</dbReference>
<dbReference type="SUPFAM" id="SSF82185">
    <property type="entry name" value="Histone H3 K4-specific methyltransferase SET7/9 N-terminal domain"/>
    <property type="match status" value="2"/>
</dbReference>
<organism>
    <name type="scientific">Oryctolagus cuniculus</name>
    <name type="common">Rabbit</name>
    <dbReference type="NCBI Taxonomy" id="9986"/>
    <lineage>
        <taxon>Eukaryota</taxon>
        <taxon>Metazoa</taxon>
        <taxon>Chordata</taxon>
        <taxon>Craniata</taxon>
        <taxon>Vertebrata</taxon>
        <taxon>Euteleostomi</taxon>
        <taxon>Mammalia</taxon>
        <taxon>Eutheria</taxon>
        <taxon>Euarchontoglires</taxon>
        <taxon>Glires</taxon>
        <taxon>Lagomorpha</taxon>
        <taxon>Leporidae</taxon>
        <taxon>Oryctolagus</taxon>
    </lineage>
</organism>
<sequence>MSGGRFDFDDGGAYCGGWEGGKAHGHGLCTGPKGQGEYSGSWNFGFEVAGVYTWPSGNTFEGYWSQGKRHGLGIETKGRWLYKGEWTHGFKGRYGTRQSTSSGAKYEGTWNNGLQDGYGTETYADGGTYQGQFTNGMRHGYGVRQSVPYGMAVVVRSPLRTSLSSLRSEHSNGTVAPDSPASPAADGPALPSPAIPRGGFALSLLANAEAARAPKGGGLFPRGALLGKLRRAESRTSVGSQRSRVSFLKSDLSSGASDAASTASLGEGAEGADDAAPFEADIDATTTETYMGEWKNDKRSGFGVSERSSGLRYEGEWLDNLRHGYGCTTLPDGHREEGKYRHNVLVKGTKRRVLPLKSNKVRQKVEHSVEGAQRAAAIARQKAEIAVSRTSHARAKAEAAEQAALAANQESNIARSLARELAPDFYQPGPEYQKRRLLQEILEHSESLLEPPDRGAAGLPQPPRESPQLHERETPRPEGGPPSPAGTPPQPKRPRPGASKDGLLGPGAWNGEPSGGSGGEGSRPATPAAAGAGRRSPARPASEHMAIEALQAPPAPSREPEVALYRGYHSYAVRTAPPAPPPFEDDPQPEAADPDSAPASPATAPGQAPALGNPEPAPESPAKLEPKPIVPKAKARKTEARGLSKTGAKKKPRKEAAQAAEAEVEVEEVPNTVLICMVILLNIGLAILFVHLLT</sequence>
<feature type="chain" id="PRO_0000159849" description="Junctophilin-2">
    <location>
        <begin position="1"/>
        <end position="694"/>
    </location>
</feature>
<feature type="chain" id="PRO_0000446377" description="Junctophilin-2 N-terminal fragment" evidence="3">
    <location>
        <begin position="1"/>
        <end position="574"/>
    </location>
</feature>
<feature type="topological domain" description="Cytoplasmic" evidence="4">
    <location>
        <begin position="1"/>
        <end position="672"/>
    </location>
</feature>
<feature type="transmembrane region" description="Helical; Anchor for type IV membrane protein" evidence="4">
    <location>
        <begin position="673"/>
        <end position="693"/>
    </location>
</feature>
<feature type="repeat" description="MORN 1" evidence="4">
    <location>
        <begin position="14"/>
        <end position="36"/>
    </location>
</feature>
<feature type="repeat" description="MORN 2" evidence="4">
    <location>
        <begin position="38"/>
        <end position="59"/>
    </location>
</feature>
<feature type="repeat" description="MORN 3" evidence="4">
    <location>
        <begin position="60"/>
        <end position="79"/>
    </location>
</feature>
<feature type="repeat" description="MORN 4" evidence="4">
    <location>
        <begin position="82"/>
        <end position="104"/>
    </location>
</feature>
<feature type="repeat" description="MORN 5" evidence="4">
    <location>
        <begin position="106"/>
        <end position="128"/>
    </location>
</feature>
<feature type="repeat" description="MORN 6" evidence="4">
    <location>
        <begin position="129"/>
        <end position="151"/>
    </location>
</feature>
<feature type="repeat" description="MORN 7" evidence="4">
    <location>
        <begin position="290"/>
        <end position="312"/>
    </location>
</feature>
<feature type="repeat" description="MORN 8" evidence="4">
    <location>
        <begin position="313"/>
        <end position="335"/>
    </location>
</feature>
<feature type="region of interest" description="Disordered" evidence="5">
    <location>
        <begin position="164"/>
        <end position="192"/>
    </location>
</feature>
<feature type="region of interest" description="Disordered" evidence="5">
    <location>
        <begin position="231"/>
        <end position="278"/>
    </location>
</feature>
<feature type="region of interest" description="Disordered" evidence="5">
    <location>
        <begin position="448"/>
        <end position="663"/>
    </location>
</feature>
<feature type="short sequence motif" description="Bipartite nuclear localization signal" evidence="3">
    <location>
        <begin position="350"/>
        <end position="364"/>
    </location>
</feature>
<feature type="short sequence motif" description="Nuclear localization signal" evidence="3">
    <location>
        <begin position="492"/>
        <end position="496"/>
    </location>
</feature>
<feature type="compositionally biased region" description="Low complexity" evidence="5">
    <location>
        <begin position="176"/>
        <end position="189"/>
    </location>
</feature>
<feature type="compositionally biased region" description="Polar residues" evidence="5">
    <location>
        <begin position="235"/>
        <end position="244"/>
    </location>
</feature>
<feature type="compositionally biased region" description="Low complexity" evidence="5">
    <location>
        <begin position="250"/>
        <end position="267"/>
    </location>
</feature>
<feature type="compositionally biased region" description="Basic and acidic residues" evidence="5">
    <location>
        <begin position="467"/>
        <end position="476"/>
    </location>
</feature>
<feature type="compositionally biased region" description="Pro residues" evidence="5">
    <location>
        <begin position="478"/>
        <end position="491"/>
    </location>
</feature>
<feature type="compositionally biased region" description="Low complexity" evidence="5">
    <location>
        <begin position="522"/>
        <end position="540"/>
    </location>
</feature>
<feature type="compositionally biased region" description="Low complexity" evidence="5">
    <location>
        <begin position="589"/>
        <end position="610"/>
    </location>
</feature>
<feature type="site" description="Cleavage; by calpain" evidence="3">
    <location>
        <begin position="155"/>
        <end position="156"/>
    </location>
</feature>
<feature type="site" description="Cleavage; by calpain" evidence="3">
    <location>
        <begin position="204"/>
        <end position="205"/>
    </location>
</feature>
<feature type="site" description="Cleavage; by calpain" evidence="3">
    <location>
        <begin position="574"/>
        <end position="575"/>
    </location>
</feature>
<feature type="modified residue" description="Phosphoserine" evidence="1">
    <location>
        <position position="162"/>
    </location>
</feature>
<feature type="modified residue" description="Phosphoserine" evidence="2">
    <location>
        <position position="165"/>
    </location>
</feature>
<feature type="modified residue" description="Phosphoserine" evidence="1">
    <location>
        <position position="445"/>
    </location>
</feature>
<feature type="modified residue" description="Phosphoserine" evidence="1">
    <location>
        <position position="447"/>
    </location>
</feature>
<feature type="modified residue" description="Phosphoserine" evidence="2">
    <location>
        <position position="466"/>
    </location>
</feature>
<feature type="modified residue" description="Phosphothreonine" evidence="3">
    <location>
        <position position="474"/>
    </location>
</feature>
<feature type="modified residue" description="Phosphoserine" evidence="2">
    <location>
        <position position="483"/>
    </location>
</feature>
<feature type="modified residue" description="Phosphothreonine" evidence="2">
    <location>
        <position position="487"/>
    </location>
</feature>
<feature type="modified residue" description="Phosphoserine" evidence="1">
    <location>
        <position position="536"/>
    </location>
</feature>
<feature type="modified residue" description="Phosphoserine" evidence="1">
    <location>
        <position position="542"/>
    </location>
</feature>
<feature type="modified residue" description="Phosphoserine" evidence="3">
    <location>
        <position position="596"/>
    </location>
</feature>
<feature type="modified residue" description="Phosphoserine" evidence="3">
    <location>
        <position position="600"/>
    </location>
</feature>
<gene>
    <name type="primary">JPH2</name>
    <name type="synonym">JP2</name>
</gene>
<protein>
    <recommendedName>
        <fullName>Junctophilin-2</fullName>
        <shortName>JP-2</shortName>
    </recommendedName>
    <alternativeName>
        <fullName>Junctophilin type 2</fullName>
    </alternativeName>
    <component>
        <recommendedName>
            <fullName evidence="3">Junctophilin-2 N-terminal fragment</fullName>
            <shortName evidence="3">JP2NT</shortName>
        </recommendedName>
    </component>
</protein>
<accession>Q9GKY7</accession>
<proteinExistence type="evidence at transcript level"/>
<evidence type="ECO:0000250" key="1">
    <source>
        <dbReference type="UniProtKB" id="Q2PS20"/>
    </source>
</evidence>
<evidence type="ECO:0000250" key="2">
    <source>
        <dbReference type="UniProtKB" id="Q9BR39"/>
    </source>
</evidence>
<evidence type="ECO:0000250" key="3">
    <source>
        <dbReference type="UniProtKB" id="Q9ET78"/>
    </source>
</evidence>
<evidence type="ECO:0000255" key="4"/>
<evidence type="ECO:0000256" key="5">
    <source>
        <dbReference type="SAM" id="MobiDB-lite"/>
    </source>
</evidence>
<evidence type="ECO:0000305" key="6"/>